<evidence type="ECO:0000255" key="1">
    <source>
        <dbReference type="HAMAP-Rule" id="MF_00036"/>
    </source>
</evidence>
<sequence>MKTQDIAQRWLDFFAAKGHTVVPSASLISADPSILFNIAGMVPFVPYLSGREKAPYDRATSVQKCIRTADIDEVGKTVRHGTFFQMCGNFSFGDYFKEGAITFAWELLTSSIADGGYGLDPSRLWATVYVDGTEKDEEARAIWRDKIGIPEERIQGTGKADNFWSTGQPGPGGPCSEIYYDLGAKYGQEGGPIVDETRYIEIWNLVFMQYQLSAVRSKTDFDIAGDLPNRNIDTGLGLERLAMILQGVENLYETDQVRPVLDAAAELAGKDYTSTVDPADPHHADDVRLRVVADHIRSALMLIADGVAPSNEGRGYVLRRLIRRAVRAMRLMGVEKPCLPALLPVSREAMKGFYPAVEEDFERISRIAYAEEKSFLRTIASGTARLDEAVTESKAKNQPLSGAEAFALHDTYGFPIDLTLEMAAEAGLAVDETGFRALMLEQRQRAQADSREKKSGHADLSAFNELLAQGQTVFTGYSELDGESAIRGLLSGGQPIAKASQGQEIELVLAETPFYAEAGGQAADTGLISGDGFVIEVLDVQRPVKDLSVHKAIVREGEVAIGASVRAAVDRERRHAAEQAHTGTHIVHAALHQILGPEALQRGSFNKAGYLRFDFAWGEGLSTATRSEIEEVANIAIRNNYSVQTTEMPIDEAKALGAMALFGENYGSRVRVVEIDGAWSRELCGGTHVDTTSRIGSLTLLGEQSVGYGNRRVEAFVGMDAFRHLAAERALVSELTEIMKVPSTQLADRIGATLAKLRATEKELDRLRKAQLTAAAGELTTKAQQVGKTRLLTHDVGQIGGADELRSLALDLRERLGSEAAVVALTGESNDRPMVLVATNEAARAAGVKAGALVKLAAGVLGGGGGGKDDVAQGGGSNVGQIPAALAAINQAVAAL</sequence>
<comment type="function">
    <text evidence="1">Catalyzes the attachment of alanine to tRNA(Ala) in a two-step reaction: alanine is first activated by ATP to form Ala-AMP and then transferred to the acceptor end of tRNA(Ala). Also edits incorrectly charged Ser-tRNA(Ala) and Gly-tRNA(Ala) via its editing domain.</text>
</comment>
<comment type="catalytic activity">
    <reaction evidence="1">
        <text>tRNA(Ala) + L-alanine + ATP = L-alanyl-tRNA(Ala) + AMP + diphosphate</text>
        <dbReference type="Rhea" id="RHEA:12540"/>
        <dbReference type="Rhea" id="RHEA-COMP:9657"/>
        <dbReference type="Rhea" id="RHEA-COMP:9923"/>
        <dbReference type="ChEBI" id="CHEBI:30616"/>
        <dbReference type="ChEBI" id="CHEBI:33019"/>
        <dbReference type="ChEBI" id="CHEBI:57972"/>
        <dbReference type="ChEBI" id="CHEBI:78442"/>
        <dbReference type="ChEBI" id="CHEBI:78497"/>
        <dbReference type="ChEBI" id="CHEBI:456215"/>
        <dbReference type="EC" id="6.1.1.7"/>
    </reaction>
</comment>
<comment type="cofactor">
    <cofactor evidence="1">
        <name>Zn(2+)</name>
        <dbReference type="ChEBI" id="CHEBI:29105"/>
    </cofactor>
    <text evidence="1">Binds 1 zinc ion per subunit.</text>
</comment>
<comment type="subcellular location">
    <subcellularLocation>
        <location evidence="1">Cytoplasm</location>
    </subcellularLocation>
</comment>
<comment type="domain">
    <text evidence="1">Consists of three domains; the N-terminal catalytic domain, the editing domain and the C-terminal C-Ala domain. The editing domain removes incorrectly charged amino acids, while the C-Ala domain, along with tRNA(Ala), serves as a bridge to cooperatively bring together the editing and aminoacylation centers thus stimulating deacylation of misacylated tRNAs.</text>
</comment>
<comment type="similarity">
    <text evidence="1">Belongs to the class-II aminoacyl-tRNA synthetase family.</text>
</comment>
<protein>
    <recommendedName>
        <fullName evidence="1">Alanine--tRNA ligase</fullName>
        <ecNumber evidence="1">6.1.1.7</ecNumber>
    </recommendedName>
    <alternativeName>
        <fullName evidence="1">Alanyl-tRNA synthetase</fullName>
        <shortName evidence="1">AlaRS</shortName>
    </alternativeName>
</protein>
<keyword id="KW-0030">Aminoacyl-tRNA synthetase</keyword>
<keyword id="KW-0067">ATP-binding</keyword>
<keyword id="KW-0963">Cytoplasm</keyword>
<keyword id="KW-0436">Ligase</keyword>
<keyword id="KW-0479">Metal-binding</keyword>
<keyword id="KW-0547">Nucleotide-binding</keyword>
<keyword id="KW-0648">Protein biosynthesis</keyword>
<keyword id="KW-1185">Reference proteome</keyword>
<keyword id="KW-0694">RNA-binding</keyword>
<keyword id="KW-0820">tRNA-binding</keyword>
<keyword id="KW-0862">Zinc</keyword>
<gene>
    <name evidence="1" type="primary">alaS</name>
    <name type="ordered locus">RSal33209_1979</name>
</gene>
<organism>
    <name type="scientific">Renibacterium salmoninarum (strain ATCC 33209 / DSM 20767 / JCM 11484 / NBRC 15589 / NCIMB 2235)</name>
    <dbReference type="NCBI Taxonomy" id="288705"/>
    <lineage>
        <taxon>Bacteria</taxon>
        <taxon>Bacillati</taxon>
        <taxon>Actinomycetota</taxon>
        <taxon>Actinomycetes</taxon>
        <taxon>Micrococcales</taxon>
        <taxon>Micrococcaceae</taxon>
        <taxon>Renibacterium</taxon>
    </lineage>
</organism>
<reference key="1">
    <citation type="journal article" date="2008" name="J. Bacteriol.">
        <title>Genome sequence of the fish pathogen Renibacterium salmoninarum suggests reductive evolution away from an environmental Arthrobacter ancestor.</title>
        <authorList>
            <person name="Wiens G.D."/>
            <person name="Rockey D.D."/>
            <person name="Wu Z."/>
            <person name="Chang J."/>
            <person name="Levy R."/>
            <person name="Crane S."/>
            <person name="Chen D.S."/>
            <person name="Capri G.R."/>
            <person name="Burnett J.R."/>
            <person name="Sudheesh P.S."/>
            <person name="Schipma M.J."/>
            <person name="Burd H."/>
            <person name="Bhattacharyya A."/>
            <person name="Rhodes L.D."/>
            <person name="Kaul R."/>
            <person name="Strom M.S."/>
        </authorList>
    </citation>
    <scope>NUCLEOTIDE SEQUENCE [LARGE SCALE GENOMIC DNA]</scope>
    <source>
        <strain>ATCC 33209 / DSM 20767 / JCM 11484 / NBRC 15589 / NCIMB 2235</strain>
    </source>
</reference>
<dbReference type="EC" id="6.1.1.7" evidence="1"/>
<dbReference type="EMBL" id="CP000910">
    <property type="protein sequence ID" value="ABY23712.1"/>
    <property type="molecule type" value="Genomic_DNA"/>
</dbReference>
<dbReference type="RefSeq" id="WP_012245382.1">
    <property type="nucleotide sequence ID" value="NC_010168.1"/>
</dbReference>
<dbReference type="SMR" id="A9WSC4"/>
<dbReference type="STRING" id="288705.RSal33209_1979"/>
<dbReference type="KEGG" id="rsa:RSal33209_1979"/>
<dbReference type="eggNOG" id="COG0013">
    <property type="taxonomic scope" value="Bacteria"/>
</dbReference>
<dbReference type="HOGENOM" id="CLU_004485_1_1_11"/>
<dbReference type="Proteomes" id="UP000002007">
    <property type="component" value="Chromosome"/>
</dbReference>
<dbReference type="GO" id="GO:0005829">
    <property type="term" value="C:cytosol"/>
    <property type="evidence" value="ECO:0007669"/>
    <property type="project" value="TreeGrafter"/>
</dbReference>
<dbReference type="GO" id="GO:0004813">
    <property type="term" value="F:alanine-tRNA ligase activity"/>
    <property type="evidence" value="ECO:0007669"/>
    <property type="project" value="UniProtKB-UniRule"/>
</dbReference>
<dbReference type="GO" id="GO:0002161">
    <property type="term" value="F:aminoacyl-tRNA deacylase activity"/>
    <property type="evidence" value="ECO:0007669"/>
    <property type="project" value="TreeGrafter"/>
</dbReference>
<dbReference type="GO" id="GO:0005524">
    <property type="term" value="F:ATP binding"/>
    <property type="evidence" value="ECO:0007669"/>
    <property type="project" value="UniProtKB-UniRule"/>
</dbReference>
<dbReference type="GO" id="GO:0000049">
    <property type="term" value="F:tRNA binding"/>
    <property type="evidence" value="ECO:0007669"/>
    <property type="project" value="UniProtKB-KW"/>
</dbReference>
<dbReference type="GO" id="GO:0008270">
    <property type="term" value="F:zinc ion binding"/>
    <property type="evidence" value="ECO:0007669"/>
    <property type="project" value="UniProtKB-UniRule"/>
</dbReference>
<dbReference type="GO" id="GO:0006419">
    <property type="term" value="P:alanyl-tRNA aminoacylation"/>
    <property type="evidence" value="ECO:0007669"/>
    <property type="project" value="UniProtKB-UniRule"/>
</dbReference>
<dbReference type="CDD" id="cd00673">
    <property type="entry name" value="AlaRS_core"/>
    <property type="match status" value="1"/>
</dbReference>
<dbReference type="FunFam" id="3.10.310.40:FF:000001">
    <property type="entry name" value="Alanine--tRNA ligase"/>
    <property type="match status" value="1"/>
</dbReference>
<dbReference type="FunFam" id="3.30.54.20:FF:000001">
    <property type="entry name" value="Alanine--tRNA ligase"/>
    <property type="match status" value="1"/>
</dbReference>
<dbReference type="FunFam" id="3.30.980.10:FF:000004">
    <property type="entry name" value="Alanine--tRNA ligase, cytoplasmic"/>
    <property type="match status" value="1"/>
</dbReference>
<dbReference type="Gene3D" id="2.40.30.130">
    <property type="match status" value="1"/>
</dbReference>
<dbReference type="Gene3D" id="3.10.310.40">
    <property type="match status" value="1"/>
</dbReference>
<dbReference type="Gene3D" id="3.30.54.20">
    <property type="match status" value="1"/>
</dbReference>
<dbReference type="Gene3D" id="6.10.250.550">
    <property type="match status" value="1"/>
</dbReference>
<dbReference type="Gene3D" id="3.30.930.10">
    <property type="entry name" value="Bira Bifunctional Protein, Domain 2"/>
    <property type="match status" value="1"/>
</dbReference>
<dbReference type="Gene3D" id="3.30.980.10">
    <property type="entry name" value="Threonyl-trna Synthetase, Chain A, domain 2"/>
    <property type="match status" value="1"/>
</dbReference>
<dbReference type="HAMAP" id="MF_00036_B">
    <property type="entry name" value="Ala_tRNA_synth_B"/>
    <property type="match status" value="1"/>
</dbReference>
<dbReference type="InterPro" id="IPR045864">
    <property type="entry name" value="aa-tRNA-synth_II/BPL/LPL"/>
</dbReference>
<dbReference type="InterPro" id="IPR002318">
    <property type="entry name" value="Ala-tRNA-lgiase_IIc"/>
</dbReference>
<dbReference type="InterPro" id="IPR018162">
    <property type="entry name" value="Ala-tRNA-ligase_IIc_anticod-bd"/>
</dbReference>
<dbReference type="InterPro" id="IPR018165">
    <property type="entry name" value="Ala-tRNA-synth_IIc_core"/>
</dbReference>
<dbReference type="InterPro" id="IPR018164">
    <property type="entry name" value="Ala-tRNA-synth_IIc_N"/>
</dbReference>
<dbReference type="InterPro" id="IPR050058">
    <property type="entry name" value="Ala-tRNA_ligase"/>
</dbReference>
<dbReference type="InterPro" id="IPR023033">
    <property type="entry name" value="Ala_tRNA_ligase_euk/bac"/>
</dbReference>
<dbReference type="InterPro" id="IPR003156">
    <property type="entry name" value="DHHA1_dom"/>
</dbReference>
<dbReference type="InterPro" id="IPR018163">
    <property type="entry name" value="Thr/Ala-tRNA-synth_IIc_edit"/>
</dbReference>
<dbReference type="InterPro" id="IPR009000">
    <property type="entry name" value="Transl_B-barrel_sf"/>
</dbReference>
<dbReference type="InterPro" id="IPR012947">
    <property type="entry name" value="tRNA_SAD"/>
</dbReference>
<dbReference type="NCBIfam" id="TIGR00344">
    <property type="entry name" value="alaS"/>
    <property type="match status" value="1"/>
</dbReference>
<dbReference type="PANTHER" id="PTHR11777:SF9">
    <property type="entry name" value="ALANINE--TRNA LIGASE, CYTOPLASMIC"/>
    <property type="match status" value="1"/>
</dbReference>
<dbReference type="PANTHER" id="PTHR11777">
    <property type="entry name" value="ALANYL-TRNA SYNTHETASE"/>
    <property type="match status" value="1"/>
</dbReference>
<dbReference type="Pfam" id="PF02272">
    <property type="entry name" value="DHHA1"/>
    <property type="match status" value="1"/>
</dbReference>
<dbReference type="Pfam" id="PF01411">
    <property type="entry name" value="tRNA-synt_2c"/>
    <property type="match status" value="1"/>
</dbReference>
<dbReference type="Pfam" id="PF07973">
    <property type="entry name" value="tRNA_SAD"/>
    <property type="match status" value="1"/>
</dbReference>
<dbReference type="PRINTS" id="PR00980">
    <property type="entry name" value="TRNASYNTHALA"/>
</dbReference>
<dbReference type="SMART" id="SM00863">
    <property type="entry name" value="tRNA_SAD"/>
    <property type="match status" value="1"/>
</dbReference>
<dbReference type="SUPFAM" id="SSF55681">
    <property type="entry name" value="Class II aaRS and biotin synthetases"/>
    <property type="match status" value="1"/>
</dbReference>
<dbReference type="SUPFAM" id="SSF101353">
    <property type="entry name" value="Putative anticodon-binding domain of alanyl-tRNA synthetase (AlaRS)"/>
    <property type="match status" value="1"/>
</dbReference>
<dbReference type="SUPFAM" id="SSF55186">
    <property type="entry name" value="ThrRS/AlaRS common domain"/>
    <property type="match status" value="1"/>
</dbReference>
<dbReference type="SUPFAM" id="SSF50447">
    <property type="entry name" value="Translation proteins"/>
    <property type="match status" value="1"/>
</dbReference>
<dbReference type="PROSITE" id="PS50860">
    <property type="entry name" value="AA_TRNA_LIGASE_II_ALA"/>
    <property type="match status" value="1"/>
</dbReference>
<feature type="chain" id="PRO_0000347749" description="Alanine--tRNA ligase">
    <location>
        <begin position="1"/>
        <end position="896"/>
    </location>
</feature>
<feature type="binding site" evidence="1">
    <location>
        <position position="581"/>
    </location>
    <ligand>
        <name>Zn(2+)</name>
        <dbReference type="ChEBI" id="CHEBI:29105"/>
    </ligand>
</feature>
<feature type="binding site" evidence="1">
    <location>
        <position position="585"/>
    </location>
    <ligand>
        <name>Zn(2+)</name>
        <dbReference type="ChEBI" id="CHEBI:29105"/>
    </ligand>
</feature>
<feature type="binding site" evidence="1">
    <location>
        <position position="684"/>
    </location>
    <ligand>
        <name>Zn(2+)</name>
        <dbReference type="ChEBI" id="CHEBI:29105"/>
    </ligand>
</feature>
<feature type="binding site" evidence="1">
    <location>
        <position position="688"/>
    </location>
    <ligand>
        <name>Zn(2+)</name>
        <dbReference type="ChEBI" id="CHEBI:29105"/>
    </ligand>
</feature>
<proteinExistence type="inferred from homology"/>
<name>SYA_RENSM</name>
<accession>A9WSC4</accession>